<accession>Q8DT52</accession>
<dbReference type="EC" id="2.4.1.18" evidence="1"/>
<dbReference type="EMBL" id="AE014133">
    <property type="protein sequence ID" value="AAN59189.1"/>
    <property type="molecule type" value="Genomic_DNA"/>
</dbReference>
<dbReference type="RefSeq" id="NP_721883.1">
    <property type="nucleotide sequence ID" value="NC_004350.2"/>
</dbReference>
<dbReference type="RefSeq" id="WP_002262951.1">
    <property type="nucleotide sequence ID" value="NC_004350.2"/>
</dbReference>
<dbReference type="SMR" id="Q8DT52"/>
<dbReference type="STRING" id="210007.SMU_1539"/>
<dbReference type="CAZy" id="CBM48">
    <property type="family name" value="Carbohydrate-Binding Module Family 48"/>
</dbReference>
<dbReference type="CAZy" id="GH13">
    <property type="family name" value="Glycoside Hydrolase Family 13"/>
</dbReference>
<dbReference type="GeneID" id="93859028"/>
<dbReference type="KEGG" id="smu:SMU_1539"/>
<dbReference type="PATRIC" id="fig|210007.7.peg.1371"/>
<dbReference type="eggNOG" id="COG0296">
    <property type="taxonomic scope" value="Bacteria"/>
</dbReference>
<dbReference type="HOGENOM" id="CLU_004245_4_0_9"/>
<dbReference type="OrthoDB" id="9800174at2"/>
<dbReference type="PhylomeDB" id="Q8DT52"/>
<dbReference type="BRENDA" id="2.4.1.18">
    <property type="organism ID" value="5941"/>
</dbReference>
<dbReference type="UniPathway" id="UPA00164"/>
<dbReference type="Proteomes" id="UP000002512">
    <property type="component" value="Chromosome"/>
</dbReference>
<dbReference type="GO" id="GO:0005829">
    <property type="term" value="C:cytosol"/>
    <property type="evidence" value="ECO:0007669"/>
    <property type="project" value="TreeGrafter"/>
</dbReference>
<dbReference type="GO" id="GO:0003844">
    <property type="term" value="F:1,4-alpha-glucan branching enzyme activity"/>
    <property type="evidence" value="ECO:0007669"/>
    <property type="project" value="UniProtKB-UniRule"/>
</dbReference>
<dbReference type="GO" id="GO:0043169">
    <property type="term" value="F:cation binding"/>
    <property type="evidence" value="ECO:0007669"/>
    <property type="project" value="InterPro"/>
</dbReference>
<dbReference type="GO" id="GO:0004553">
    <property type="term" value="F:hydrolase activity, hydrolyzing O-glycosyl compounds"/>
    <property type="evidence" value="ECO:0007669"/>
    <property type="project" value="InterPro"/>
</dbReference>
<dbReference type="GO" id="GO:0005978">
    <property type="term" value="P:glycogen biosynthetic process"/>
    <property type="evidence" value="ECO:0007669"/>
    <property type="project" value="UniProtKB-UniRule"/>
</dbReference>
<dbReference type="CDD" id="cd11322">
    <property type="entry name" value="AmyAc_Glg_BE"/>
    <property type="match status" value="1"/>
</dbReference>
<dbReference type="CDD" id="cd02855">
    <property type="entry name" value="E_set_GBE_prok_N"/>
    <property type="match status" value="1"/>
</dbReference>
<dbReference type="FunFam" id="3.20.20.80:FF:000003">
    <property type="entry name" value="1,4-alpha-glucan branching enzyme GlgB"/>
    <property type="match status" value="1"/>
</dbReference>
<dbReference type="Gene3D" id="3.20.20.80">
    <property type="entry name" value="Glycosidases"/>
    <property type="match status" value="1"/>
</dbReference>
<dbReference type="Gene3D" id="2.60.40.1180">
    <property type="entry name" value="Golgi alpha-mannosidase II"/>
    <property type="match status" value="1"/>
</dbReference>
<dbReference type="Gene3D" id="2.60.40.10">
    <property type="entry name" value="Immunoglobulins"/>
    <property type="match status" value="1"/>
</dbReference>
<dbReference type="HAMAP" id="MF_00685">
    <property type="entry name" value="GlgB"/>
    <property type="match status" value="1"/>
</dbReference>
<dbReference type="InterPro" id="IPR006048">
    <property type="entry name" value="A-amylase/branching_C"/>
</dbReference>
<dbReference type="InterPro" id="IPR037439">
    <property type="entry name" value="Branching_enzy"/>
</dbReference>
<dbReference type="InterPro" id="IPR006407">
    <property type="entry name" value="GlgB"/>
</dbReference>
<dbReference type="InterPro" id="IPR044143">
    <property type="entry name" value="GlgB_N_E_set_prok"/>
</dbReference>
<dbReference type="InterPro" id="IPR006047">
    <property type="entry name" value="Glyco_hydro_13_cat_dom"/>
</dbReference>
<dbReference type="InterPro" id="IPR004193">
    <property type="entry name" value="Glyco_hydro_13_N"/>
</dbReference>
<dbReference type="InterPro" id="IPR013780">
    <property type="entry name" value="Glyco_hydro_b"/>
</dbReference>
<dbReference type="InterPro" id="IPR017853">
    <property type="entry name" value="Glycoside_hydrolase_SF"/>
</dbReference>
<dbReference type="InterPro" id="IPR013783">
    <property type="entry name" value="Ig-like_fold"/>
</dbReference>
<dbReference type="InterPro" id="IPR014756">
    <property type="entry name" value="Ig_E-set"/>
</dbReference>
<dbReference type="NCBIfam" id="TIGR01515">
    <property type="entry name" value="branching_enzym"/>
    <property type="match status" value="1"/>
</dbReference>
<dbReference type="NCBIfam" id="NF003811">
    <property type="entry name" value="PRK05402.1"/>
    <property type="match status" value="1"/>
</dbReference>
<dbReference type="NCBIfam" id="NF008967">
    <property type="entry name" value="PRK12313.1"/>
    <property type="match status" value="1"/>
</dbReference>
<dbReference type="PANTHER" id="PTHR43651">
    <property type="entry name" value="1,4-ALPHA-GLUCAN-BRANCHING ENZYME"/>
    <property type="match status" value="1"/>
</dbReference>
<dbReference type="PANTHER" id="PTHR43651:SF3">
    <property type="entry name" value="1,4-ALPHA-GLUCAN-BRANCHING ENZYME"/>
    <property type="match status" value="1"/>
</dbReference>
<dbReference type="Pfam" id="PF00128">
    <property type="entry name" value="Alpha-amylase"/>
    <property type="match status" value="2"/>
</dbReference>
<dbReference type="Pfam" id="PF02806">
    <property type="entry name" value="Alpha-amylase_C"/>
    <property type="match status" value="1"/>
</dbReference>
<dbReference type="Pfam" id="PF02922">
    <property type="entry name" value="CBM_48"/>
    <property type="match status" value="1"/>
</dbReference>
<dbReference type="PIRSF" id="PIRSF000463">
    <property type="entry name" value="GlgB"/>
    <property type="match status" value="1"/>
</dbReference>
<dbReference type="SMART" id="SM00642">
    <property type="entry name" value="Aamy"/>
    <property type="match status" value="1"/>
</dbReference>
<dbReference type="SUPFAM" id="SSF51445">
    <property type="entry name" value="(Trans)glycosidases"/>
    <property type="match status" value="1"/>
</dbReference>
<dbReference type="SUPFAM" id="SSF81296">
    <property type="entry name" value="E set domains"/>
    <property type="match status" value="1"/>
</dbReference>
<dbReference type="SUPFAM" id="SSF51011">
    <property type="entry name" value="Glycosyl hydrolase domain"/>
    <property type="match status" value="1"/>
</dbReference>
<name>GLGB_STRMU</name>
<gene>
    <name evidence="1" type="primary">glgB</name>
    <name type="ordered locus">SMU_1539</name>
</gene>
<evidence type="ECO:0000255" key="1">
    <source>
        <dbReference type="HAMAP-Rule" id="MF_00685"/>
    </source>
</evidence>
<comment type="function">
    <text evidence="1">Catalyzes the formation of the alpha-1,6-glucosidic linkages in glycogen by scission of a 1,4-alpha-linked oligosaccharide from growing alpha-1,4-glucan chains and the subsequent attachment of the oligosaccharide to the alpha-1,6 position.</text>
</comment>
<comment type="catalytic activity">
    <reaction evidence="1">
        <text>Transfers a segment of a (1-&gt;4)-alpha-D-glucan chain to a primary hydroxy group in a similar glucan chain.</text>
        <dbReference type="EC" id="2.4.1.18"/>
    </reaction>
</comment>
<comment type="pathway">
    <text evidence="1">Glycan biosynthesis; glycogen biosynthesis.</text>
</comment>
<comment type="subunit">
    <text evidence="1">Monomer.</text>
</comment>
<comment type="similarity">
    <text evidence="1">Belongs to the glycosyl hydrolase 13 family. GlgB subfamily.</text>
</comment>
<protein>
    <recommendedName>
        <fullName evidence="1">1,4-alpha-glucan branching enzyme GlgB</fullName>
        <ecNumber evidence="1">2.4.1.18</ecNumber>
    </recommendedName>
    <alternativeName>
        <fullName evidence="1">1,4-alpha-D-glucan:1,4-alpha-D-glucan 6-glucosyl-transferase</fullName>
    </alternativeName>
    <alternativeName>
        <fullName evidence="1">Alpha-(1-&gt;4)-glucan branching enzyme</fullName>
    </alternativeName>
    <alternativeName>
        <fullName evidence="1">Glycogen branching enzyme</fullName>
        <shortName evidence="1">BE</shortName>
    </alternativeName>
</protein>
<reference key="1">
    <citation type="journal article" date="2002" name="Proc. Natl. Acad. Sci. U.S.A.">
        <title>Genome sequence of Streptococcus mutans UA159, a cariogenic dental pathogen.</title>
        <authorList>
            <person name="Ajdic D.J."/>
            <person name="McShan W.M."/>
            <person name="McLaughlin R.E."/>
            <person name="Savic G."/>
            <person name="Chang J."/>
            <person name="Carson M.B."/>
            <person name="Primeaux C."/>
            <person name="Tian R."/>
            <person name="Kenton S."/>
            <person name="Jia H.G."/>
            <person name="Lin S.P."/>
            <person name="Qian Y."/>
            <person name="Li S."/>
            <person name="Zhu H."/>
            <person name="Najar F.Z."/>
            <person name="Lai H."/>
            <person name="White J."/>
            <person name="Roe B.A."/>
            <person name="Ferretti J.J."/>
        </authorList>
    </citation>
    <scope>NUCLEOTIDE SEQUENCE [LARGE SCALE GENOMIC DNA]</scope>
    <source>
        <strain>ATCC 700610 / UA159</strain>
    </source>
</reference>
<keyword id="KW-0119">Carbohydrate metabolism</keyword>
<keyword id="KW-0320">Glycogen biosynthesis</keyword>
<keyword id="KW-0321">Glycogen metabolism</keyword>
<keyword id="KW-0328">Glycosyltransferase</keyword>
<keyword id="KW-1185">Reference proteome</keyword>
<keyword id="KW-0808">Transferase</keyword>
<organism>
    <name type="scientific">Streptococcus mutans serotype c (strain ATCC 700610 / UA159)</name>
    <dbReference type="NCBI Taxonomy" id="210007"/>
    <lineage>
        <taxon>Bacteria</taxon>
        <taxon>Bacillati</taxon>
        <taxon>Bacillota</taxon>
        <taxon>Bacilli</taxon>
        <taxon>Lactobacillales</taxon>
        <taxon>Streptococcaceae</taxon>
        <taxon>Streptococcus</taxon>
    </lineage>
</organism>
<feature type="chain" id="PRO_0000188751" description="1,4-alpha-glucan branching enzyme GlgB">
    <location>
        <begin position="1"/>
        <end position="628"/>
    </location>
</feature>
<feature type="active site" description="Nucleophile" evidence="1">
    <location>
        <position position="304"/>
    </location>
</feature>
<feature type="active site" description="Proton donor" evidence="1">
    <location>
        <position position="355"/>
    </location>
</feature>
<sequence length="628" mass="73968">MNEREALRTFGTGENFHAQHYFGFHETEKNGVKGYIFRVWAPNAEDLHLIGDFTGWFDNPLQMDKNEAGVWEVFTDLPKEGHIYKYLVKRQGGQIVEKMDPFAIYLEERPGTGSLIRTIPEKKWKDGLWLGRRKRWGFFKRPVNIYEVHAGSWKQNEDGSPYSFEQLKDELVPYLVKMNYTHVEFMPLMAHPLGMSWGYQLMGFFAFEHTYGTPEQFQDFVEACHLNNIGVIVDWVPGHFTQNDDALAYFDGTPTFEYQDHDRAHNYRWGALNFDLGKNQVQSFLISSAKFWIDFYHIDGIRVDAVSNMLYLDYDEGPWQPNIEGNNRNLEGYYFLQRLNTVLKLAHPDVMMIAEESTATTKITGRREEGGLGFDYKWNMGWMNDILKFYEEDPIYRKYDFNLVTFSFMYLFSENFILPFSHDEVVHGKKSLMHKMWGDRYNQFAGLRNLYTYQICHPGKKLLFMGSEFGQFLEWKYDHALEWTNLEEEDGLNLKMQDFTSQLNQFYKDHKVLWQLDTSYDGLEIIDADNVDESVLSFIRKNEKGDLLVCVFNMVPVERKGFTIGVPVAGIYEEVWNTELEEFGGVWKEHNMTVKTQKNLWKEYENTLSFTLPALGASIWKIKRRLRK</sequence>
<proteinExistence type="inferred from homology"/>